<accession>A1JS57</accession>
<gene>
    <name evidence="2" type="primary">rpsL</name>
    <name type="ordered locus">YE3930</name>
</gene>
<comment type="function">
    <text evidence="2">With S4 and S5 plays an important role in translational accuracy.</text>
</comment>
<comment type="function">
    <text evidence="2">Interacts with and stabilizes bases of the 16S rRNA that are involved in tRNA selection in the A site and with the mRNA backbone. Located at the interface of the 30S and 50S subunits, it traverses the body of the 30S subunit contacting proteins on the other side and probably holding the rRNA structure together. The combined cluster of proteins S8, S12 and S17 appears to hold together the shoulder and platform of the 30S subunit.</text>
</comment>
<comment type="subunit">
    <text evidence="2">Part of the 30S ribosomal subunit. Contacts proteins S8 and S17. May interact with IF1 in the 30S initiation complex.</text>
</comment>
<comment type="similarity">
    <text evidence="2">Belongs to the universal ribosomal protein uS12 family.</text>
</comment>
<evidence type="ECO:0000250" key="1"/>
<evidence type="ECO:0000255" key="2">
    <source>
        <dbReference type="HAMAP-Rule" id="MF_00403"/>
    </source>
</evidence>
<evidence type="ECO:0000305" key="3"/>
<sequence>MATINQLVRKPRSMKVAKSNVPALEACPQKRGVCTRVYTTTPKKPNSALRKVCRVRLTNGFEVTSYIGGEGHNLQEHSVILIRGGRVKDLPGVRYHTVRGALDCSGVKDRKQSRSKYGVKKPKA</sequence>
<proteinExistence type="inferred from homology"/>
<feature type="chain" id="PRO_0000296044" description="Small ribosomal subunit protein uS12">
    <location>
        <begin position="1"/>
        <end position="124"/>
    </location>
</feature>
<feature type="modified residue" description="3-methylthioaspartic acid" evidence="1">
    <location>
        <position position="89"/>
    </location>
</feature>
<dbReference type="EMBL" id="AM286415">
    <property type="protein sequence ID" value="CAL13949.1"/>
    <property type="molecule type" value="Genomic_DNA"/>
</dbReference>
<dbReference type="RefSeq" id="WP_002212323.1">
    <property type="nucleotide sequence ID" value="NC_008800.1"/>
</dbReference>
<dbReference type="RefSeq" id="YP_001008075.1">
    <property type="nucleotide sequence ID" value="NC_008800.1"/>
</dbReference>
<dbReference type="SMR" id="A1JS57"/>
<dbReference type="GeneID" id="97454224"/>
<dbReference type="KEGG" id="yen:YE3930"/>
<dbReference type="PATRIC" id="fig|393305.7.peg.4180"/>
<dbReference type="eggNOG" id="COG0048">
    <property type="taxonomic scope" value="Bacteria"/>
</dbReference>
<dbReference type="HOGENOM" id="CLU_104295_1_2_6"/>
<dbReference type="OrthoDB" id="9802366at2"/>
<dbReference type="PRO" id="PR:A1JS57"/>
<dbReference type="Proteomes" id="UP000000642">
    <property type="component" value="Chromosome"/>
</dbReference>
<dbReference type="GO" id="GO:0015935">
    <property type="term" value="C:small ribosomal subunit"/>
    <property type="evidence" value="ECO:0007669"/>
    <property type="project" value="InterPro"/>
</dbReference>
<dbReference type="GO" id="GO:0019843">
    <property type="term" value="F:rRNA binding"/>
    <property type="evidence" value="ECO:0007669"/>
    <property type="project" value="UniProtKB-UniRule"/>
</dbReference>
<dbReference type="GO" id="GO:0003735">
    <property type="term" value="F:structural constituent of ribosome"/>
    <property type="evidence" value="ECO:0007669"/>
    <property type="project" value="InterPro"/>
</dbReference>
<dbReference type="GO" id="GO:0000049">
    <property type="term" value="F:tRNA binding"/>
    <property type="evidence" value="ECO:0007669"/>
    <property type="project" value="UniProtKB-UniRule"/>
</dbReference>
<dbReference type="GO" id="GO:0006412">
    <property type="term" value="P:translation"/>
    <property type="evidence" value="ECO:0007669"/>
    <property type="project" value="UniProtKB-UniRule"/>
</dbReference>
<dbReference type="CDD" id="cd03368">
    <property type="entry name" value="Ribosomal_S12"/>
    <property type="match status" value="1"/>
</dbReference>
<dbReference type="FunFam" id="2.40.50.140:FF:000001">
    <property type="entry name" value="30S ribosomal protein S12"/>
    <property type="match status" value="1"/>
</dbReference>
<dbReference type="Gene3D" id="2.40.50.140">
    <property type="entry name" value="Nucleic acid-binding proteins"/>
    <property type="match status" value="1"/>
</dbReference>
<dbReference type="HAMAP" id="MF_00403_B">
    <property type="entry name" value="Ribosomal_uS12_B"/>
    <property type="match status" value="1"/>
</dbReference>
<dbReference type="InterPro" id="IPR012340">
    <property type="entry name" value="NA-bd_OB-fold"/>
</dbReference>
<dbReference type="InterPro" id="IPR006032">
    <property type="entry name" value="Ribosomal_uS12"/>
</dbReference>
<dbReference type="InterPro" id="IPR005679">
    <property type="entry name" value="Ribosomal_uS12_bac"/>
</dbReference>
<dbReference type="NCBIfam" id="TIGR00981">
    <property type="entry name" value="rpsL_bact"/>
    <property type="match status" value="1"/>
</dbReference>
<dbReference type="PANTHER" id="PTHR11652">
    <property type="entry name" value="30S RIBOSOMAL PROTEIN S12 FAMILY MEMBER"/>
    <property type="match status" value="1"/>
</dbReference>
<dbReference type="Pfam" id="PF00164">
    <property type="entry name" value="Ribosom_S12_S23"/>
    <property type="match status" value="1"/>
</dbReference>
<dbReference type="PIRSF" id="PIRSF002133">
    <property type="entry name" value="Ribosomal_S12/S23"/>
    <property type="match status" value="1"/>
</dbReference>
<dbReference type="PRINTS" id="PR01034">
    <property type="entry name" value="RIBOSOMALS12"/>
</dbReference>
<dbReference type="SUPFAM" id="SSF50249">
    <property type="entry name" value="Nucleic acid-binding proteins"/>
    <property type="match status" value="1"/>
</dbReference>
<dbReference type="PROSITE" id="PS00055">
    <property type="entry name" value="RIBOSOMAL_S12"/>
    <property type="match status" value="1"/>
</dbReference>
<reference key="1">
    <citation type="journal article" date="2006" name="PLoS Genet.">
        <title>The complete genome sequence and comparative genome analysis of the high pathogenicity Yersinia enterocolitica strain 8081.</title>
        <authorList>
            <person name="Thomson N.R."/>
            <person name="Howard S."/>
            <person name="Wren B.W."/>
            <person name="Holden M.T.G."/>
            <person name="Crossman L."/>
            <person name="Challis G.L."/>
            <person name="Churcher C."/>
            <person name="Mungall K."/>
            <person name="Brooks K."/>
            <person name="Chillingworth T."/>
            <person name="Feltwell T."/>
            <person name="Abdellah Z."/>
            <person name="Hauser H."/>
            <person name="Jagels K."/>
            <person name="Maddison M."/>
            <person name="Moule S."/>
            <person name="Sanders M."/>
            <person name="Whitehead S."/>
            <person name="Quail M.A."/>
            <person name="Dougan G."/>
            <person name="Parkhill J."/>
            <person name="Prentice M.B."/>
        </authorList>
    </citation>
    <scope>NUCLEOTIDE SEQUENCE [LARGE SCALE GENOMIC DNA]</scope>
    <source>
        <strain>NCTC 13174 / 8081</strain>
    </source>
</reference>
<keyword id="KW-0488">Methylation</keyword>
<keyword id="KW-0687">Ribonucleoprotein</keyword>
<keyword id="KW-0689">Ribosomal protein</keyword>
<keyword id="KW-0694">RNA-binding</keyword>
<keyword id="KW-0699">rRNA-binding</keyword>
<keyword id="KW-0820">tRNA-binding</keyword>
<name>RS12_YERE8</name>
<organism>
    <name type="scientific">Yersinia enterocolitica serotype O:8 / biotype 1B (strain NCTC 13174 / 8081)</name>
    <dbReference type="NCBI Taxonomy" id="393305"/>
    <lineage>
        <taxon>Bacteria</taxon>
        <taxon>Pseudomonadati</taxon>
        <taxon>Pseudomonadota</taxon>
        <taxon>Gammaproteobacteria</taxon>
        <taxon>Enterobacterales</taxon>
        <taxon>Yersiniaceae</taxon>
        <taxon>Yersinia</taxon>
    </lineage>
</organism>
<protein>
    <recommendedName>
        <fullName evidence="2">Small ribosomal subunit protein uS12</fullName>
    </recommendedName>
    <alternativeName>
        <fullName evidence="3">30S ribosomal protein S12</fullName>
    </alternativeName>
</protein>